<evidence type="ECO:0000255" key="1">
    <source>
        <dbReference type="HAMAP-Rule" id="MF_00140"/>
    </source>
</evidence>
<comment type="function">
    <text evidence="1">Catalyzes the attachment of tryptophan to tRNA(Trp).</text>
</comment>
<comment type="catalytic activity">
    <reaction evidence="1">
        <text>tRNA(Trp) + L-tryptophan + ATP = L-tryptophyl-tRNA(Trp) + AMP + diphosphate + H(+)</text>
        <dbReference type="Rhea" id="RHEA:24080"/>
        <dbReference type="Rhea" id="RHEA-COMP:9671"/>
        <dbReference type="Rhea" id="RHEA-COMP:9705"/>
        <dbReference type="ChEBI" id="CHEBI:15378"/>
        <dbReference type="ChEBI" id="CHEBI:30616"/>
        <dbReference type="ChEBI" id="CHEBI:33019"/>
        <dbReference type="ChEBI" id="CHEBI:57912"/>
        <dbReference type="ChEBI" id="CHEBI:78442"/>
        <dbReference type="ChEBI" id="CHEBI:78535"/>
        <dbReference type="ChEBI" id="CHEBI:456215"/>
        <dbReference type="EC" id="6.1.1.2"/>
    </reaction>
</comment>
<comment type="subunit">
    <text evidence="1">Homodimer.</text>
</comment>
<comment type="subcellular location">
    <subcellularLocation>
        <location evidence="1">Cytoplasm</location>
    </subcellularLocation>
</comment>
<comment type="similarity">
    <text evidence="1">Belongs to the class-I aminoacyl-tRNA synthetase family.</text>
</comment>
<feature type="chain" id="PRO_0000136666" description="Tryptophan--tRNA ligase">
    <location>
        <begin position="1"/>
        <end position="355"/>
    </location>
</feature>
<feature type="short sequence motif" description="'HIGH' region" evidence="1">
    <location>
        <begin position="14"/>
        <end position="22"/>
    </location>
</feature>
<feature type="short sequence motif" description="'KMSKS' region" evidence="1">
    <location>
        <begin position="217"/>
        <end position="221"/>
    </location>
</feature>
<feature type="binding site" evidence="1">
    <location>
        <begin position="13"/>
        <end position="15"/>
    </location>
    <ligand>
        <name>ATP</name>
        <dbReference type="ChEBI" id="CHEBI:30616"/>
    </ligand>
</feature>
<feature type="binding site" evidence="1">
    <location>
        <begin position="21"/>
        <end position="22"/>
    </location>
    <ligand>
        <name>ATP</name>
        <dbReference type="ChEBI" id="CHEBI:30616"/>
    </ligand>
</feature>
<feature type="binding site" evidence="1">
    <location>
        <position position="137"/>
    </location>
    <ligand>
        <name>L-tryptophan</name>
        <dbReference type="ChEBI" id="CHEBI:57912"/>
    </ligand>
</feature>
<feature type="binding site" evidence="1">
    <location>
        <begin position="149"/>
        <end position="151"/>
    </location>
    <ligand>
        <name>ATP</name>
        <dbReference type="ChEBI" id="CHEBI:30616"/>
    </ligand>
</feature>
<feature type="binding site" evidence="1">
    <location>
        <position position="208"/>
    </location>
    <ligand>
        <name>ATP</name>
        <dbReference type="ChEBI" id="CHEBI:30616"/>
    </ligand>
</feature>
<feature type="binding site" evidence="1">
    <location>
        <begin position="217"/>
        <end position="221"/>
    </location>
    <ligand>
        <name>ATP</name>
        <dbReference type="ChEBI" id="CHEBI:30616"/>
    </ligand>
</feature>
<dbReference type="EC" id="6.1.1.2" evidence="1"/>
<dbReference type="EMBL" id="BA000012">
    <property type="protein sequence ID" value="BAB51790.1"/>
    <property type="molecule type" value="Genomic_DNA"/>
</dbReference>
<dbReference type="RefSeq" id="WP_010913129.1">
    <property type="nucleotide sequence ID" value="NC_002678.2"/>
</dbReference>
<dbReference type="SMR" id="Q98C31"/>
<dbReference type="KEGG" id="mlo:mll5317"/>
<dbReference type="PATRIC" id="fig|266835.9.peg.4216"/>
<dbReference type="eggNOG" id="COG0180">
    <property type="taxonomic scope" value="Bacteria"/>
</dbReference>
<dbReference type="HOGENOM" id="CLU_029244_1_4_5"/>
<dbReference type="Proteomes" id="UP000000552">
    <property type="component" value="Chromosome"/>
</dbReference>
<dbReference type="GO" id="GO:0005829">
    <property type="term" value="C:cytosol"/>
    <property type="evidence" value="ECO:0007669"/>
    <property type="project" value="TreeGrafter"/>
</dbReference>
<dbReference type="GO" id="GO:0005524">
    <property type="term" value="F:ATP binding"/>
    <property type="evidence" value="ECO:0007669"/>
    <property type="project" value="UniProtKB-UniRule"/>
</dbReference>
<dbReference type="GO" id="GO:0004830">
    <property type="term" value="F:tryptophan-tRNA ligase activity"/>
    <property type="evidence" value="ECO:0007669"/>
    <property type="project" value="UniProtKB-UniRule"/>
</dbReference>
<dbReference type="GO" id="GO:0006436">
    <property type="term" value="P:tryptophanyl-tRNA aminoacylation"/>
    <property type="evidence" value="ECO:0007669"/>
    <property type="project" value="UniProtKB-UniRule"/>
</dbReference>
<dbReference type="CDD" id="cd00806">
    <property type="entry name" value="TrpRS_core"/>
    <property type="match status" value="1"/>
</dbReference>
<dbReference type="Gene3D" id="3.40.50.620">
    <property type="entry name" value="HUPs"/>
    <property type="match status" value="1"/>
</dbReference>
<dbReference type="Gene3D" id="1.10.240.10">
    <property type="entry name" value="Tyrosyl-Transfer RNA Synthetase"/>
    <property type="match status" value="1"/>
</dbReference>
<dbReference type="HAMAP" id="MF_00140_B">
    <property type="entry name" value="Trp_tRNA_synth_B"/>
    <property type="match status" value="1"/>
</dbReference>
<dbReference type="InterPro" id="IPR001412">
    <property type="entry name" value="aa-tRNA-synth_I_CS"/>
</dbReference>
<dbReference type="InterPro" id="IPR002305">
    <property type="entry name" value="aa-tRNA-synth_Ic"/>
</dbReference>
<dbReference type="InterPro" id="IPR014729">
    <property type="entry name" value="Rossmann-like_a/b/a_fold"/>
</dbReference>
<dbReference type="InterPro" id="IPR002306">
    <property type="entry name" value="Trp-tRNA-ligase"/>
</dbReference>
<dbReference type="InterPro" id="IPR024109">
    <property type="entry name" value="Trp-tRNA-ligase_bac-type"/>
</dbReference>
<dbReference type="InterPro" id="IPR050203">
    <property type="entry name" value="Trp-tRNA_synthetase"/>
</dbReference>
<dbReference type="NCBIfam" id="TIGR00233">
    <property type="entry name" value="trpS"/>
    <property type="match status" value="1"/>
</dbReference>
<dbReference type="PANTHER" id="PTHR43766">
    <property type="entry name" value="TRYPTOPHAN--TRNA LIGASE, MITOCHONDRIAL"/>
    <property type="match status" value="1"/>
</dbReference>
<dbReference type="PANTHER" id="PTHR43766:SF1">
    <property type="entry name" value="TRYPTOPHAN--TRNA LIGASE, MITOCHONDRIAL"/>
    <property type="match status" value="1"/>
</dbReference>
<dbReference type="Pfam" id="PF00579">
    <property type="entry name" value="tRNA-synt_1b"/>
    <property type="match status" value="1"/>
</dbReference>
<dbReference type="PRINTS" id="PR01039">
    <property type="entry name" value="TRNASYNTHTRP"/>
</dbReference>
<dbReference type="SUPFAM" id="SSF52374">
    <property type="entry name" value="Nucleotidylyl transferase"/>
    <property type="match status" value="1"/>
</dbReference>
<dbReference type="PROSITE" id="PS00178">
    <property type="entry name" value="AA_TRNA_LIGASE_I"/>
    <property type="match status" value="1"/>
</dbReference>
<name>SYW_RHILO</name>
<sequence>MSAFKPLVFSGVQPTGNLHLGNYLGAIKKFVALQETSDCIYCVVDLHSLTAQLVHEDLADQTRSITAAFLASGIDPKKHIVFNQSRVMQHAELAWIFNCVARIGWMNKMTQFKDKAGKDRENASLGLLAYPSLMAADILLYRATHVPVGEDQKQHLELTRDIAQKFNNDFSDRIARLGVGVEMQVGEETVNGFFPITEPVIGGPAARIMSLRDGSKKMSKSDPSDLSRINLTDDADTISKKIRKAKTDPEALPSEVSGLESRPEAENLVGIYAGLAEMSKADVLKEFGGQQFSVFKPALADLAVEKLAPIAGEMRRIEGDRAYVDAVLRDGGERAGVLAETTMKTVRDIIGLLQG</sequence>
<organism>
    <name type="scientific">Mesorhizobium japonicum (strain LMG 29417 / CECT 9101 / MAFF 303099)</name>
    <name type="common">Mesorhizobium loti (strain MAFF 303099)</name>
    <dbReference type="NCBI Taxonomy" id="266835"/>
    <lineage>
        <taxon>Bacteria</taxon>
        <taxon>Pseudomonadati</taxon>
        <taxon>Pseudomonadota</taxon>
        <taxon>Alphaproteobacteria</taxon>
        <taxon>Hyphomicrobiales</taxon>
        <taxon>Phyllobacteriaceae</taxon>
        <taxon>Mesorhizobium</taxon>
    </lineage>
</organism>
<keyword id="KW-0030">Aminoacyl-tRNA synthetase</keyword>
<keyword id="KW-0067">ATP-binding</keyword>
<keyword id="KW-0963">Cytoplasm</keyword>
<keyword id="KW-0436">Ligase</keyword>
<keyword id="KW-0547">Nucleotide-binding</keyword>
<keyword id="KW-0648">Protein biosynthesis</keyword>
<protein>
    <recommendedName>
        <fullName evidence="1">Tryptophan--tRNA ligase</fullName>
        <ecNumber evidence="1">6.1.1.2</ecNumber>
    </recommendedName>
    <alternativeName>
        <fullName evidence="1">Tryptophanyl-tRNA synthetase</fullName>
        <shortName evidence="1">TrpRS</shortName>
    </alternativeName>
</protein>
<reference key="1">
    <citation type="journal article" date="2000" name="DNA Res.">
        <title>Complete genome structure of the nitrogen-fixing symbiotic bacterium Mesorhizobium loti.</title>
        <authorList>
            <person name="Kaneko T."/>
            <person name="Nakamura Y."/>
            <person name="Sato S."/>
            <person name="Asamizu E."/>
            <person name="Kato T."/>
            <person name="Sasamoto S."/>
            <person name="Watanabe A."/>
            <person name="Idesawa K."/>
            <person name="Ishikawa A."/>
            <person name="Kawashima K."/>
            <person name="Kimura T."/>
            <person name="Kishida Y."/>
            <person name="Kiyokawa C."/>
            <person name="Kohara M."/>
            <person name="Matsumoto M."/>
            <person name="Matsuno A."/>
            <person name="Mochizuki Y."/>
            <person name="Nakayama S."/>
            <person name="Nakazaki N."/>
            <person name="Shimpo S."/>
            <person name="Sugimoto M."/>
            <person name="Takeuchi C."/>
            <person name="Yamada M."/>
            <person name="Tabata S."/>
        </authorList>
    </citation>
    <scope>NUCLEOTIDE SEQUENCE [LARGE SCALE GENOMIC DNA]</scope>
    <source>
        <strain>LMG 29417 / CECT 9101 / MAFF 303099</strain>
    </source>
</reference>
<gene>
    <name evidence="1" type="primary">trpS</name>
    <name type="ordered locus">mll5317</name>
</gene>
<accession>Q98C31</accession>
<proteinExistence type="inferred from homology"/>